<sequence>MLEQQRNSADALTVSVLNAQSQVTSKPLRDSVKQALRNYLAQLDGQDVNDLYELVLAEVEHPMLDMIMQYTRGNQTRAANMLGINRGTLRKKLKKYGMG</sequence>
<gene>
    <name evidence="1" type="primary">fis</name>
    <name type="ordered locus">HI_0980</name>
</gene>
<feature type="chain" id="PRO_0000203884" description="DNA-binding protein Fis">
    <location>
        <begin position="1"/>
        <end position="99"/>
    </location>
</feature>
<feature type="DNA-binding region" description="H-T-H motif" evidence="1">
    <location>
        <begin position="75"/>
        <end position="94"/>
    </location>
</feature>
<dbReference type="EMBL" id="L42023">
    <property type="protein sequence ID" value="AAC22640.1"/>
    <property type="molecule type" value="Genomic_DNA"/>
</dbReference>
<dbReference type="PIR" id="A64106">
    <property type="entry name" value="A64106"/>
</dbReference>
<dbReference type="RefSeq" id="NP_439143.1">
    <property type="nucleotide sequence ID" value="NC_000907.1"/>
</dbReference>
<dbReference type="SMR" id="P44966"/>
<dbReference type="STRING" id="71421.HI_0980"/>
<dbReference type="EnsemblBacteria" id="AAC22640">
    <property type="protein sequence ID" value="AAC22640"/>
    <property type="gene ID" value="HI_0980"/>
</dbReference>
<dbReference type="KEGG" id="hin:HI_0980"/>
<dbReference type="PATRIC" id="fig|71421.8.peg.1023"/>
<dbReference type="eggNOG" id="COG2901">
    <property type="taxonomic scope" value="Bacteria"/>
</dbReference>
<dbReference type="HOGENOM" id="CLU_158040_3_0_6"/>
<dbReference type="OrthoDB" id="9802388at2"/>
<dbReference type="PhylomeDB" id="P44966"/>
<dbReference type="BioCyc" id="HINF71421:G1GJ1-1022-MONOMER"/>
<dbReference type="Proteomes" id="UP000000579">
    <property type="component" value="Chromosome"/>
</dbReference>
<dbReference type="GO" id="GO:0003700">
    <property type="term" value="F:DNA-binding transcription factor activity"/>
    <property type="evidence" value="ECO:0007669"/>
    <property type="project" value="UniProtKB-UniRule"/>
</dbReference>
<dbReference type="GO" id="GO:0043565">
    <property type="term" value="F:sequence-specific DNA binding"/>
    <property type="evidence" value="ECO:0000318"/>
    <property type="project" value="GO_Central"/>
</dbReference>
<dbReference type="FunFam" id="1.10.10.60:FF:000006">
    <property type="entry name" value="DNA-binding protein Fis"/>
    <property type="match status" value="1"/>
</dbReference>
<dbReference type="Gene3D" id="1.10.10.60">
    <property type="entry name" value="Homeodomain-like"/>
    <property type="match status" value="1"/>
</dbReference>
<dbReference type="HAMAP" id="MF_00166">
    <property type="entry name" value="DNA_binding_Fis"/>
    <property type="match status" value="1"/>
</dbReference>
<dbReference type="InterPro" id="IPR005412">
    <property type="entry name" value="Fis_DNA-bd"/>
</dbReference>
<dbReference type="InterPro" id="IPR009057">
    <property type="entry name" value="Homeodomain-like_sf"/>
</dbReference>
<dbReference type="InterPro" id="IPR002197">
    <property type="entry name" value="HTH_Fis"/>
</dbReference>
<dbReference type="InterPro" id="IPR050207">
    <property type="entry name" value="Trans_regulatory_Fis"/>
</dbReference>
<dbReference type="NCBIfam" id="NF001659">
    <property type="entry name" value="PRK00430.1"/>
    <property type="match status" value="1"/>
</dbReference>
<dbReference type="PANTHER" id="PTHR47918">
    <property type="entry name" value="DNA-BINDING PROTEIN FIS"/>
    <property type="match status" value="1"/>
</dbReference>
<dbReference type="PANTHER" id="PTHR47918:SF1">
    <property type="entry name" value="DNA-BINDING PROTEIN FIS"/>
    <property type="match status" value="1"/>
</dbReference>
<dbReference type="Pfam" id="PF02954">
    <property type="entry name" value="HTH_8"/>
    <property type="match status" value="1"/>
</dbReference>
<dbReference type="PIRSF" id="PIRSF002097">
    <property type="entry name" value="DNA-binding_Fis"/>
    <property type="match status" value="1"/>
</dbReference>
<dbReference type="PRINTS" id="PR01591">
    <property type="entry name" value="DNABINDNGFIS"/>
</dbReference>
<dbReference type="PRINTS" id="PR01590">
    <property type="entry name" value="HTHFIS"/>
</dbReference>
<dbReference type="SUPFAM" id="SSF46689">
    <property type="entry name" value="Homeodomain-like"/>
    <property type="match status" value="1"/>
</dbReference>
<reference key="1">
    <citation type="journal article" date="1995" name="Science">
        <title>Whole-genome random sequencing and assembly of Haemophilus influenzae Rd.</title>
        <authorList>
            <person name="Fleischmann R.D."/>
            <person name="Adams M.D."/>
            <person name="White O."/>
            <person name="Clayton R.A."/>
            <person name="Kirkness E.F."/>
            <person name="Kerlavage A.R."/>
            <person name="Bult C.J."/>
            <person name="Tomb J.-F."/>
            <person name="Dougherty B.A."/>
            <person name="Merrick J.M."/>
            <person name="McKenney K."/>
            <person name="Sutton G.G."/>
            <person name="FitzHugh W."/>
            <person name="Fields C.A."/>
            <person name="Gocayne J.D."/>
            <person name="Scott J.D."/>
            <person name="Shirley R."/>
            <person name="Liu L.-I."/>
            <person name="Glodek A."/>
            <person name="Kelley J.M."/>
            <person name="Weidman J.F."/>
            <person name="Phillips C.A."/>
            <person name="Spriggs T."/>
            <person name="Hedblom E."/>
            <person name="Cotton M.D."/>
            <person name="Utterback T.R."/>
            <person name="Hanna M.C."/>
            <person name="Nguyen D.T."/>
            <person name="Saudek D.M."/>
            <person name="Brandon R.C."/>
            <person name="Fine L.D."/>
            <person name="Fritchman J.L."/>
            <person name="Fuhrmann J.L."/>
            <person name="Geoghagen N.S.M."/>
            <person name="Gnehm C.L."/>
            <person name="McDonald L.A."/>
            <person name="Small K.V."/>
            <person name="Fraser C.M."/>
            <person name="Smith H.O."/>
            <person name="Venter J.C."/>
        </authorList>
    </citation>
    <scope>NUCLEOTIDE SEQUENCE [LARGE SCALE GENOMIC DNA]</scope>
    <source>
        <strain>ATCC 51907 / DSM 11121 / KW20 / Rd</strain>
    </source>
</reference>
<comment type="function">
    <text evidence="1">Activates ribosomal RNA transcription. Plays a direct role in upstream activation of rRNA promoters.</text>
</comment>
<comment type="subunit">
    <text evidence="1">Homodimer.</text>
</comment>
<comment type="similarity">
    <text evidence="1">Belongs to the transcriptional regulatory Fis family.</text>
</comment>
<accession>P44966</accession>
<keyword id="KW-0010">Activator</keyword>
<keyword id="KW-0238">DNA-binding</keyword>
<keyword id="KW-1185">Reference proteome</keyword>
<keyword id="KW-0804">Transcription</keyword>
<keyword id="KW-0805">Transcription regulation</keyword>
<protein>
    <recommendedName>
        <fullName evidence="1">DNA-binding protein Fis</fullName>
    </recommendedName>
</protein>
<proteinExistence type="inferred from homology"/>
<name>FIS_HAEIN</name>
<organism>
    <name type="scientific">Haemophilus influenzae (strain ATCC 51907 / DSM 11121 / KW20 / Rd)</name>
    <dbReference type="NCBI Taxonomy" id="71421"/>
    <lineage>
        <taxon>Bacteria</taxon>
        <taxon>Pseudomonadati</taxon>
        <taxon>Pseudomonadota</taxon>
        <taxon>Gammaproteobacteria</taxon>
        <taxon>Pasteurellales</taxon>
        <taxon>Pasteurellaceae</taxon>
        <taxon>Haemophilus</taxon>
    </lineage>
</organism>
<evidence type="ECO:0000255" key="1">
    <source>
        <dbReference type="HAMAP-Rule" id="MF_00166"/>
    </source>
</evidence>